<feature type="chain" id="PRO_1000194522" description="tRNA pseudouridine synthase A">
    <location>
        <begin position="1"/>
        <end position="265"/>
    </location>
</feature>
<feature type="active site" description="Nucleophile" evidence="1">
    <location>
        <position position="53"/>
    </location>
</feature>
<feature type="binding site" evidence="1">
    <location>
        <position position="111"/>
    </location>
    <ligand>
        <name>substrate</name>
    </ligand>
</feature>
<evidence type="ECO:0000255" key="1">
    <source>
        <dbReference type="HAMAP-Rule" id="MF_00171"/>
    </source>
</evidence>
<proteinExistence type="inferred from homology"/>
<keyword id="KW-0413">Isomerase</keyword>
<keyword id="KW-0819">tRNA processing</keyword>
<protein>
    <recommendedName>
        <fullName evidence="1">tRNA pseudouridine synthase A</fullName>
        <ecNumber evidence="1">5.4.99.12</ecNumber>
    </recommendedName>
    <alternativeName>
        <fullName evidence="1">tRNA pseudouridine(38-40) synthase</fullName>
    </alternativeName>
    <alternativeName>
        <fullName evidence="1">tRNA pseudouridylate synthase I</fullName>
    </alternativeName>
    <alternativeName>
        <fullName evidence="1">tRNA-uridine isomerase I</fullName>
    </alternativeName>
</protein>
<dbReference type="EC" id="5.4.99.12" evidence="1"/>
<dbReference type="EMBL" id="CP001182">
    <property type="protein sequence ID" value="ACJ39923.1"/>
    <property type="molecule type" value="Genomic_DNA"/>
</dbReference>
<dbReference type="RefSeq" id="WP_001190110.1">
    <property type="nucleotide sequence ID" value="NC_011586.2"/>
</dbReference>
<dbReference type="SMR" id="B7I4E8"/>
<dbReference type="KEGG" id="abn:AB57_0502"/>
<dbReference type="HOGENOM" id="CLU_014673_0_2_6"/>
<dbReference type="Proteomes" id="UP000007094">
    <property type="component" value="Chromosome"/>
</dbReference>
<dbReference type="GO" id="GO:0003723">
    <property type="term" value="F:RNA binding"/>
    <property type="evidence" value="ECO:0007669"/>
    <property type="project" value="InterPro"/>
</dbReference>
<dbReference type="GO" id="GO:0160147">
    <property type="term" value="F:tRNA pseudouridine(38-40) synthase activity"/>
    <property type="evidence" value="ECO:0007669"/>
    <property type="project" value="UniProtKB-EC"/>
</dbReference>
<dbReference type="GO" id="GO:0031119">
    <property type="term" value="P:tRNA pseudouridine synthesis"/>
    <property type="evidence" value="ECO:0007669"/>
    <property type="project" value="UniProtKB-UniRule"/>
</dbReference>
<dbReference type="CDD" id="cd02570">
    <property type="entry name" value="PseudoU_synth_EcTruA"/>
    <property type="match status" value="1"/>
</dbReference>
<dbReference type="FunFam" id="3.30.70.580:FF:000001">
    <property type="entry name" value="tRNA pseudouridine synthase A"/>
    <property type="match status" value="1"/>
</dbReference>
<dbReference type="Gene3D" id="3.30.70.660">
    <property type="entry name" value="Pseudouridine synthase I, catalytic domain, C-terminal subdomain"/>
    <property type="match status" value="1"/>
</dbReference>
<dbReference type="Gene3D" id="3.30.70.580">
    <property type="entry name" value="Pseudouridine synthase I, catalytic domain, N-terminal subdomain"/>
    <property type="match status" value="1"/>
</dbReference>
<dbReference type="HAMAP" id="MF_00171">
    <property type="entry name" value="TruA"/>
    <property type="match status" value="1"/>
</dbReference>
<dbReference type="InterPro" id="IPR020103">
    <property type="entry name" value="PsdUridine_synth_cat_dom_sf"/>
</dbReference>
<dbReference type="InterPro" id="IPR001406">
    <property type="entry name" value="PsdUridine_synth_TruA"/>
</dbReference>
<dbReference type="InterPro" id="IPR020097">
    <property type="entry name" value="PsdUridine_synth_TruA_a/b_dom"/>
</dbReference>
<dbReference type="InterPro" id="IPR020095">
    <property type="entry name" value="PsdUridine_synth_TruA_C"/>
</dbReference>
<dbReference type="InterPro" id="IPR020094">
    <property type="entry name" value="TruA/RsuA/RluB/E/F_N"/>
</dbReference>
<dbReference type="NCBIfam" id="TIGR00071">
    <property type="entry name" value="hisT_truA"/>
    <property type="match status" value="1"/>
</dbReference>
<dbReference type="PANTHER" id="PTHR11142">
    <property type="entry name" value="PSEUDOURIDYLATE SYNTHASE"/>
    <property type="match status" value="1"/>
</dbReference>
<dbReference type="PANTHER" id="PTHR11142:SF0">
    <property type="entry name" value="TRNA PSEUDOURIDINE SYNTHASE-LIKE 1"/>
    <property type="match status" value="1"/>
</dbReference>
<dbReference type="Pfam" id="PF01416">
    <property type="entry name" value="PseudoU_synth_1"/>
    <property type="match status" value="2"/>
</dbReference>
<dbReference type="PIRSF" id="PIRSF001430">
    <property type="entry name" value="tRNA_psdUrid_synth"/>
    <property type="match status" value="1"/>
</dbReference>
<dbReference type="SUPFAM" id="SSF55120">
    <property type="entry name" value="Pseudouridine synthase"/>
    <property type="match status" value="1"/>
</dbReference>
<organism>
    <name type="scientific">Acinetobacter baumannii (strain AB0057)</name>
    <dbReference type="NCBI Taxonomy" id="480119"/>
    <lineage>
        <taxon>Bacteria</taxon>
        <taxon>Pseudomonadati</taxon>
        <taxon>Pseudomonadota</taxon>
        <taxon>Gammaproteobacteria</taxon>
        <taxon>Moraxellales</taxon>
        <taxon>Moraxellaceae</taxon>
        <taxon>Acinetobacter</taxon>
        <taxon>Acinetobacter calcoaceticus/baumannii complex</taxon>
    </lineage>
</organism>
<comment type="function">
    <text evidence="1">Formation of pseudouridine at positions 38, 39 and 40 in the anticodon stem and loop of transfer RNAs.</text>
</comment>
<comment type="catalytic activity">
    <reaction evidence="1">
        <text>uridine(38/39/40) in tRNA = pseudouridine(38/39/40) in tRNA</text>
        <dbReference type="Rhea" id="RHEA:22376"/>
        <dbReference type="Rhea" id="RHEA-COMP:10085"/>
        <dbReference type="Rhea" id="RHEA-COMP:10087"/>
        <dbReference type="ChEBI" id="CHEBI:65314"/>
        <dbReference type="ChEBI" id="CHEBI:65315"/>
        <dbReference type="EC" id="5.4.99.12"/>
    </reaction>
</comment>
<comment type="subunit">
    <text evidence="1">Homodimer.</text>
</comment>
<comment type="similarity">
    <text evidence="1">Belongs to the tRNA pseudouridine synthase TruA family.</text>
</comment>
<sequence length="265" mass="30351">MQRYAVGIEFSGIQYRGWQTQQPGVASVQETIERVLSKIADEPITLHGAGRTDAGVHATNMVAHFDTTAIRPERGWIMGANSQLPKDISIQWIKQMDEEFHARFKATARRYRYVVYNAPHRPALLHKQVTHIYQKLDVQKMIKAASKFEGTHNFETFRAAACQSNQPVRHVKHCRLFQHGRYLVLDIQADGFLHHMVRNIMGCLLEIGQGMYEIDHIDTMFAAEDRKAAGITAPPDGLYFIQCYYPEQFDLPQPPLGPHWLNLPE</sequence>
<reference key="1">
    <citation type="journal article" date="2008" name="J. Bacteriol.">
        <title>Comparative genome sequence analysis of multidrug-resistant Acinetobacter baumannii.</title>
        <authorList>
            <person name="Adams M.D."/>
            <person name="Goglin K."/>
            <person name="Molyneaux N."/>
            <person name="Hujer K.M."/>
            <person name="Lavender H."/>
            <person name="Jamison J.J."/>
            <person name="MacDonald I.J."/>
            <person name="Martin K.M."/>
            <person name="Russo T."/>
            <person name="Campagnari A.A."/>
            <person name="Hujer A.M."/>
            <person name="Bonomo R.A."/>
            <person name="Gill S.R."/>
        </authorList>
    </citation>
    <scope>NUCLEOTIDE SEQUENCE [LARGE SCALE GENOMIC DNA]</scope>
    <source>
        <strain>AB0057</strain>
    </source>
</reference>
<gene>
    <name evidence="1" type="primary">truA</name>
    <name type="ordered locus">AB57_0502</name>
</gene>
<name>TRUA_ACIB5</name>
<accession>B7I4E8</accession>